<feature type="chain" id="PRO_0000181416" description="Probable nicotinate-nucleotide adenylyltransferase">
    <location>
        <begin position="1"/>
        <end position="174"/>
    </location>
</feature>
<reference key="1">
    <citation type="journal article" date="1999" name="Nature">
        <title>Genomic sequence comparison of two unrelated isolates of the human gastric pathogen Helicobacter pylori.</title>
        <authorList>
            <person name="Alm R.A."/>
            <person name="Ling L.-S.L."/>
            <person name="Moir D.T."/>
            <person name="King B.L."/>
            <person name="Brown E.D."/>
            <person name="Doig P.C."/>
            <person name="Smith D.R."/>
            <person name="Noonan B."/>
            <person name="Guild B.C."/>
            <person name="deJonge B.L."/>
            <person name="Carmel G."/>
            <person name="Tummino P.J."/>
            <person name="Caruso A."/>
            <person name="Uria-Nickelsen M."/>
            <person name="Mills D.M."/>
            <person name="Ives C."/>
            <person name="Gibson R."/>
            <person name="Merberg D."/>
            <person name="Mills S.D."/>
            <person name="Jiang Q."/>
            <person name="Taylor D.E."/>
            <person name="Vovis G.F."/>
            <person name="Trust T.J."/>
        </authorList>
    </citation>
    <scope>NUCLEOTIDE SEQUENCE [LARGE SCALE GENOMIC DNA]</scope>
    <source>
        <strain>J99 / ATCC 700824</strain>
    </source>
</reference>
<comment type="function">
    <text evidence="1">Catalyzes the reversible adenylation of nicotinate mononucleotide (NaMN) to nicotinic acid adenine dinucleotide (NaAD).</text>
</comment>
<comment type="catalytic activity">
    <reaction>
        <text>nicotinate beta-D-ribonucleotide + ATP + H(+) = deamido-NAD(+) + diphosphate</text>
        <dbReference type="Rhea" id="RHEA:22860"/>
        <dbReference type="ChEBI" id="CHEBI:15378"/>
        <dbReference type="ChEBI" id="CHEBI:30616"/>
        <dbReference type="ChEBI" id="CHEBI:33019"/>
        <dbReference type="ChEBI" id="CHEBI:57502"/>
        <dbReference type="ChEBI" id="CHEBI:58437"/>
        <dbReference type="EC" id="2.7.7.18"/>
    </reaction>
</comment>
<comment type="pathway">
    <text>Cofactor biosynthesis; NAD(+) biosynthesis; deamido-NAD(+) from nicotinate D-ribonucleotide: step 1/1.</text>
</comment>
<comment type="similarity">
    <text evidence="2">Belongs to the NadD family.</text>
</comment>
<protein>
    <recommendedName>
        <fullName>Probable nicotinate-nucleotide adenylyltransferase</fullName>
        <ecNumber>2.7.7.18</ecNumber>
    </recommendedName>
    <alternativeName>
        <fullName>Deamido-NAD(+) diphosphorylase</fullName>
    </alternativeName>
    <alternativeName>
        <fullName>Deamido-NAD(+) pyrophosphorylase</fullName>
    </alternativeName>
    <alternativeName>
        <fullName>Nicotinate mononucleotide adenylyltransferase</fullName>
        <shortName>NaMN adenylyltransferase</shortName>
    </alternativeName>
</protein>
<accession>Q9ZJP8</accession>
<evidence type="ECO:0000250" key="1"/>
<evidence type="ECO:0000305" key="2"/>
<organism>
    <name type="scientific">Helicobacter pylori (strain J99 / ATCC 700824)</name>
    <name type="common">Campylobacter pylori J99</name>
    <dbReference type="NCBI Taxonomy" id="85963"/>
    <lineage>
        <taxon>Bacteria</taxon>
        <taxon>Pseudomonadati</taxon>
        <taxon>Campylobacterota</taxon>
        <taxon>Epsilonproteobacteria</taxon>
        <taxon>Campylobacterales</taxon>
        <taxon>Helicobacteraceae</taxon>
        <taxon>Helicobacter</taxon>
    </lineage>
</organism>
<sequence>MNTMNSVLECKELALYGGSFDPLHKAHLAIIEQTLELLPFVQLIVLPAYQNPFKKPCFLDAKTRFKELERALKGMPRVLLSDFEIKQERAVPTIESVLHFQKLYRPKTLYLVIGADCLRHLSSWTNAKELLKRVELVVFERIGYEEIQFKGRYHPLKGIDAPISSSAIRASLGV</sequence>
<gene>
    <name type="primary">nadD</name>
    <name type="ordered locus">jhp_1256</name>
</gene>
<proteinExistence type="inferred from homology"/>
<dbReference type="EC" id="2.7.7.18"/>
<dbReference type="EMBL" id="AE001439">
    <property type="protein sequence ID" value="AAD06842.1"/>
    <property type="molecule type" value="Genomic_DNA"/>
</dbReference>
<dbReference type="PIR" id="B71829">
    <property type="entry name" value="B71829"/>
</dbReference>
<dbReference type="SMR" id="Q9ZJP8"/>
<dbReference type="KEGG" id="hpj:jhp_1256"/>
<dbReference type="eggNOG" id="COG1057">
    <property type="taxonomic scope" value="Bacteria"/>
</dbReference>
<dbReference type="UniPathway" id="UPA00253">
    <property type="reaction ID" value="UER00332"/>
</dbReference>
<dbReference type="Proteomes" id="UP000000804">
    <property type="component" value="Chromosome"/>
</dbReference>
<dbReference type="GO" id="GO:0005524">
    <property type="term" value="F:ATP binding"/>
    <property type="evidence" value="ECO:0007669"/>
    <property type="project" value="UniProtKB-KW"/>
</dbReference>
<dbReference type="GO" id="GO:0004515">
    <property type="term" value="F:nicotinate-nucleotide adenylyltransferase activity"/>
    <property type="evidence" value="ECO:0007669"/>
    <property type="project" value="UniProtKB-UniRule"/>
</dbReference>
<dbReference type="GO" id="GO:0009435">
    <property type="term" value="P:NAD biosynthetic process"/>
    <property type="evidence" value="ECO:0007669"/>
    <property type="project" value="UniProtKB-UniRule"/>
</dbReference>
<dbReference type="CDD" id="cd02165">
    <property type="entry name" value="NMNAT"/>
    <property type="match status" value="1"/>
</dbReference>
<dbReference type="FunFam" id="3.40.50.620:FF:000387">
    <property type="entry name" value="Probable nicotinate-nucleotide adenylyltransferase"/>
    <property type="match status" value="1"/>
</dbReference>
<dbReference type="Gene3D" id="3.40.50.620">
    <property type="entry name" value="HUPs"/>
    <property type="match status" value="1"/>
</dbReference>
<dbReference type="HAMAP" id="MF_00244">
    <property type="entry name" value="NaMN_adenylyltr"/>
    <property type="match status" value="1"/>
</dbReference>
<dbReference type="InterPro" id="IPR004821">
    <property type="entry name" value="Cyt_trans-like"/>
</dbReference>
<dbReference type="InterPro" id="IPR005248">
    <property type="entry name" value="NadD/NMNAT"/>
</dbReference>
<dbReference type="InterPro" id="IPR014729">
    <property type="entry name" value="Rossmann-like_a/b/a_fold"/>
</dbReference>
<dbReference type="NCBIfam" id="TIGR00125">
    <property type="entry name" value="cyt_tran_rel"/>
    <property type="match status" value="1"/>
</dbReference>
<dbReference type="NCBIfam" id="TIGR00482">
    <property type="entry name" value="nicotinate (nicotinamide) nucleotide adenylyltransferase"/>
    <property type="match status" value="1"/>
</dbReference>
<dbReference type="PANTHER" id="PTHR39321">
    <property type="entry name" value="NICOTINATE-NUCLEOTIDE ADENYLYLTRANSFERASE-RELATED"/>
    <property type="match status" value="1"/>
</dbReference>
<dbReference type="PANTHER" id="PTHR39321:SF3">
    <property type="entry name" value="PHOSPHOPANTETHEINE ADENYLYLTRANSFERASE"/>
    <property type="match status" value="1"/>
</dbReference>
<dbReference type="Pfam" id="PF01467">
    <property type="entry name" value="CTP_transf_like"/>
    <property type="match status" value="1"/>
</dbReference>
<dbReference type="SUPFAM" id="SSF52374">
    <property type="entry name" value="Nucleotidylyl transferase"/>
    <property type="match status" value="1"/>
</dbReference>
<keyword id="KW-0067">ATP-binding</keyword>
<keyword id="KW-0520">NAD</keyword>
<keyword id="KW-0547">Nucleotide-binding</keyword>
<keyword id="KW-0548">Nucleotidyltransferase</keyword>
<keyword id="KW-0662">Pyridine nucleotide biosynthesis</keyword>
<keyword id="KW-0808">Transferase</keyword>
<name>NADD_HELPJ</name>